<gene>
    <name type="ordered locus">At5g29576</name>
    <name type="ORF">T26N4</name>
</gene>
<organism>
    <name type="scientific">Arabidopsis thaliana</name>
    <name type="common">Mouse-ear cress</name>
    <dbReference type="NCBI Taxonomy" id="3702"/>
    <lineage>
        <taxon>Eukaryota</taxon>
        <taxon>Viridiplantae</taxon>
        <taxon>Streptophyta</taxon>
        <taxon>Embryophyta</taxon>
        <taxon>Tracheophyta</taxon>
        <taxon>Spermatophyta</taxon>
        <taxon>Magnoliopsida</taxon>
        <taxon>eudicotyledons</taxon>
        <taxon>Gunneridae</taxon>
        <taxon>Pentapetalae</taxon>
        <taxon>rosids</taxon>
        <taxon>malvids</taxon>
        <taxon>Brassicales</taxon>
        <taxon>Brassicaceae</taxon>
        <taxon>Camelineae</taxon>
        <taxon>Arabidopsis</taxon>
    </lineage>
</organism>
<name>DF134_ARATH</name>
<accession>P0CAY4</accession>
<keyword id="KW-0929">Antimicrobial</keyword>
<keyword id="KW-1015">Disulfide bond</keyword>
<keyword id="KW-0295">Fungicide</keyword>
<keyword id="KW-0611">Plant defense</keyword>
<keyword id="KW-1185">Reference proteome</keyword>
<keyword id="KW-0964">Secreted</keyword>
<keyword id="KW-0732">Signal</keyword>
<comment type="subcellular location">
    <subcellularLocation>
        <location evidence="1">Secreted</location>
    </subcellularLocation>
</comment>
<comment type="similarity">
    <text evidence="3">Belongs to the DEFL family.</text>
</comment>
<sequence length="82" mass="9203">MEVRSLNLCFLLVLVLLMSPAPTAVAFSPEDCLDDVGWILICTKPTCKFSCWTSRSVNKGRKMQDYWCSDSNTCHCVFCTGD</sequence>
<dbReference type="EMBL" id="AC090030">
    <property type="status" value="NOT_ANNOTATED_CDS"/>
    <property type="molecule type" value="Genomic_DNA"/>
</dbReference>
<dbReference type="EMBL" id="CP002688">
    <property type="status" value="NOT_ANNOTATED_CDS"/>
    <property type="molecule type" value="Genomic_DNA"/>
</dbReference>
<dbReference type="Araport" id="AT5G29576"/>
<dbReference type="TAIR" id="AT5G29576"/>
<dbReference type="InParanoid" id="P0CAY4"/>
<dbReference type="PRO" id="PR:P0CAY4"/>
<dbReference type="Proteomes" id="UP000006548">
    <property type="component" value="Chromosome 5"/>
</dbReference>
<dbReference type="GO" id="GO:0005576">
    <property type="term" value="C:extracellular region"/>
    <property type="evidence" value="ECO:0007669"/>
    <property type="project" value="UniProtKB-SubCell"/>
</dbReference>
<dbReference type="GO" id="GO:0050832">
    <property type="term" value="P:defense response to fungus"/>
    <property type="evidence" value="ECO:0007669"/>
    <property type="project" value="UniProtKB-KW"/>
</dbReference>
<dbReference type="GO" id="GO:0031640">
    <property type="term" value="P:killing of cells of another organism"/>
    <property type="evidence" value="ECO:0007669"/>
    <property type="project" value="UniProtKB-KW"/>
</dbReference>
<reference key="1">
    <citation type="journal article" date="2000" name="Nature">
        <title>Sequence and analysis of chromosome 5 of the plant Arabidopsis thaliana.</title>
        <authorList>
            <person name="Tabata S."/>
            <person name="Kaneko T."/>
            <person name="Nakamura Y."/>
            <person name="Kotani H."/>
            <person name="Kato T."/>
            <person name="Asamizu E."/>
            <person name="Miyajima N."/>
            <person name="Sasamoto S."/>
            <person name="Kimura T."/>
            <person name="Hosouchi T."/>
            <person name="Kawashima K."/>
            <person name="Kohara M."/>
            <person name="Matsumoto M."/>
            <person name="Matsuno A."/>
            <person name="Muraki A."/>
            <person name="Nakayama S."/>
            <person name="Nakazaki N."/>
            <person name="Naruo K."/>
            <person name="Okumura S."/>
            <person name="Shinpo S."/>
            <person name="Takeuchi C."/>
            <person name="Wada T."/>
            <person name="Watanabe A."/>
            <person name="Yamada M."/>
            <person name="Yasuda M."/>
            <person name="Sato S."/>
            <person name="de la Bastide M."/>
            <person name="Huang E."/>
            <person name="Spiegel L."/>
            <person name="Gnoj L."/>
            <person name="O'Shaughnessy A."/>
            <person name="Preston R."/>
            <person name="Habermann K."/>
            <person name="Murray J."/>
            <person name="Johnson D."/>
            <person name="Rohlfing T."/>
            <person name="Nelson J."/>
            <person name="Stoneking T."/>
            <person name="Pepin K."/>
            <person name="Spieth J."/>
            <person name="Sekhon M."/>
            <person name="Armstrong J."/>
            <person name="Becker M."/>
            <person name="Belter E."/>
            <person name="Cordum H."/>
            <person name="Cordes M."/>
            <person name="Courtney L."/>
            <person name="Courtney W."/>
            <person name="Dante M."/>
            <person name="Du H."/>
            <person name="Edwards J."/>
            <person name="Fryman J."/>
            <person name="Haakensen B."/>
            <person name="Lamar E."/>
            <person name="Latreille P."/>
            <person name="Leonard S."/>
            <person name="Meyer R."/>
            <person name="Mulvaney E."/>
            <person name="Ozersky P."/>
            <person name="Riley A."/>
            <person name="Strowmatt C."/>
            <person name="Wagner-McPherson C."/>
            <person name="Wollam A."/>
            <person name="Yoakum M."/>
            <person name="Bell M."/>
            <person name="Dedhia N."/>
            <person name="Parnell L."/>
            <person name="Shah R."/>
            <person name="Rodriguez M."/>
            <person name="Hoon See L."/>
            <person name="Vil D."/>
            <person name="Baker J."/>
            <person name="Kirchoff K."/>
            <person name="Toth K."/>
            <person name="King L."/>
            <person name="Bahret A."/>
            <person name="Miller B."/>
            <person name="Marra M.A."/>
            <person name="Martienssen R."/>
            <person name="McCombie W.R."/>
            <person name="Wilson R.K."/>
            <person name="Murphy G."/>
            <person name="Bancroft I."/>
            <person name="Volckaert G."/>
            <person name="Wambutt R."/>
            <person name="Duesterhoeft A."/>
            <person name="Stiekema W."/>
            <person name="Pohl T."/>
            <person name="Entian K.-D."/>
            <person name="Terryn N."/>
            <person name="Hartley N."/>
            <person name="Bent E."/>
            <person name="Johnson S."/>
            <person name="Langham S.-A."/>
            <person name="McCullagh B."/>
            <person name="Robben J."/>
            <person name="Grymonprez B."/>
            <person name="Zimmermann W."/>
            <person name="Ramsperger U."/>
            <person name="Wedler H."/>
            <person name="Balke K."/>
            <person name="Wedler E."/>
            <person name="Peters S."/>
            <person name="van Staveren M."/>
            <person name="Dirkse W."/>
            <person name="Mooijman P."/>
            <person name="Klein Lankhorst R."/>
            <person name="Weitzenegger T."/>
            <person name="Bothe G."/>
            <person name="Rose M."/>
            <person name="Hauf J."/>
            <person name="Berneiser S."/>
            <person name="Hempel S."/>
            <person name="Feldpausch M."/>
            <person name="Lamberth S."/>
            <person name="Villarroel R."/>
            <person name="Gielen J."/>
            <person name="Ardiles W."/>
            <person name="Bents O."/>
            <person name="Lemcke K."/>
            <person name="Kolesov G."/>
            <person name="Mayer K.F.X."/>
            <person name="Rudd S."/>
            <person name="Schoof H."/>
            <person name="Schueller C."/>
            <person name="Zaccaria P."/>
            <person name="Mewes H.-W."/>
            <person name="Bevan M."/>
            <person name="Fransz P.F."/>
        </authorList>
    </citation>
    <scope>NUCLEOTIDE SEQUENCE [LARGE SCALE GENOMIC DNA]</scope>
    <source>
        <strain>cv. Columbia</strain>
    </source>
</reference>
<reference key="2">
    <citation type="journal article" date="2017" name="Plant J.">
        <title>Araport11: a complete reannotation of the Arabidopsis thaliana reference genome.</title>
        <authorList>
            <person name="Cheng C.Y."/>
            <person name="Krishnakumar V."/>
            <person name="Chan A.P."/>
            <person name="Thibaud-Nissen F."/>
            <person name="Schobel S."/>
            <person name="Town C.D."/>
        </authorList>
    </citation>
    <scope>GENOME REANNOTATION</scope>
    <source>
        <strain>cv. Columbia</strain>
    </source>
</reference>
<reference key="3">
    <citation type="journal article" date="2005" name="Plant Physiol.">
        <title>Genome organization of more than 300 defensin-like genes in Arabidopsis.</title>
        <authorList>
            <person name="Silverstein K.A.T."/>
            <person name="Graham M.A."/>
            <person name="Paape T.D."/>
            <person name="VandenBosch K.A."/>
        </authorList>
    </citation>
    <scope>GENE FAMILY</scope>
</reference>
<feature type="signal peptide" evidence="2">
    <location>
        <begin position="1"/>
        <end position="26"/>
    </location>
</feature>
<feature type="chain" id="PRO_0000379681" description="Putative defensin-like protein 134">
    <location>
        <begin position="27"/>
        <end position="82"/>
    </location>
</feature>
<feature type="disulfide bond" evidence="1">
    <location>
        <begin position="32"/>
        <end position="79"/>
    </location>
</feature>
<feature type="disulfide bond" evidence="1">
    <location>
        <begin position="42"/>
        <end position="68"/>
    </location>
</feature>
<feature type="disulfide bond" evidence="1">
    <location>
        <begin position="47"/>
        <end position="74"/>
    </location>
</feature>
<feature type="disulfide bond" evidence="1">
    <location>
        <begin position="51"/>
        <end position="76"/>
    </location>
</feature>
<evidence type="ECO:0000250" key="1"/>
<evidence type="ECO:0000255" key="2"/>
<evidence type="ECO:0000305" key="3"/>
<protein>
    <recommendedName>
        <fullName>Putative defensin-like protein 134</fullName>
    </recommendedName>
</protein>
<proteinExistence type="inferred from homology"/>